<reference key="1">
    <citation type="submission" date="2007-11" db="EMBL/GenBank/DDBJ databases">
        <title>Complete genome sequence of Clostridium phytofermentans ISDg.</title>
        <authorList>
            <person name="Leschine S.B."/>
            <person name="Warnick T.A."/>
            <person name="Blanchard J.L."/>
            <person name="Schnell D.J."/>
            <person name="Petit E.L."/>
            <person name="LaTouf W.G."/>
            <person name="Copeland A."/>
            <person name="Lucas S."/>
            <person name="Lapidus A."/>
            <person name="Barry K."/>
            <person name="Glavina del Rio T."/>
            <person name="Dalin E."/>
            <person name="Tice H."/>
            <person name="Pitluck S."/>
            <person name="Kiss H."/>
            <person name="Brettin T."/>
            <person name="Bruce D."/>
            <person name="Detter J.C."/>
            <person name="Han C."/>
            <person name="Kuske C."/>
            <person name="Schmutz J."/>
            <person name="Larimer F."/>
            <person name="Land M."/>
            <person name="Hauser L."/>
            <person name="Kyrpides N."/>
            <person name="Kim E.A."/>
            <person name="Richardson P."/>
        </authorList>
    </citation>
    <scope>NUCLEOTIDE SEQUENCE [LARGE SCALE GENOMIC DNA]</scope>
    <source>
        <strain>ATCC 700394 / DSM 18823 / ISDg</strain>
    </source>
</reference>
<protein>
    <recommendedName>
        <fullName evidence="1">DNA replication and repair protein RecF</fullName>
    </recommendedName>
</protein>
<keyword id="KW-0067">ATP-binding</keyword>
<keyword id="KW-0963">Cytoplasm</keyword>
<keyword id="KW-0227">DNA damage</keyword>
<keyword id="KW-0234">DNA repair</keyword>
<keyword id="KW-0235">DNA replication</keyword>
<keyword id="KW-0238">DNA-binding</keyword>
<keyword id="KW-0547">Nucleotide-binding</keyword>
<keyword id="KW-1185">Reference proteome</keyword>
<keyword id="KW-0742">SOS response</keyword>
<name>RECF_LACP7</name>
<evidence type="ECO:0000255" key="1">
    <source>
        <dbReference type="HAMAP-Rule" id="MF_00365"/>
    </source>
</evidence>
<organism>
    <name type="scientific">Lachnoclostridium phytofermentans (strain ATCC 700394 / DSM 18823 / ISDg)</name>
    <name type="common">Clostridium phytofermentans</name>
    <dbReference type="NCBI Taxonomy" id="357809"/>
    <lineage>
        <taxon>Bacteria</taxon>
        <taxon>Bacillati</taxon>
        <taxon>Bacillota</taxon>
        <taxon>Clostridia</taxon>
        <taxon>Lachnospirales</taxon>
        <taxon>Lachnospiraceae</taxon>
    </lineage>
</organism>
<gene>
    <name evidence="1" type="primary">recF</name>
    <name type="ordered locus">Cphy_0004</name>
</gene>
<sequence length="360" mass="41227">MIVKSLELSNFRNYENLSLEFSPSTNILYGDNAQGKTNILEAVFLCATTKSHKGSKDREIIKLQSEEAHIRMRINRDDVDHRLDMHLKKNKPKGVAIDGIPIKRSSELFGIINVVFFSPEDLSIIKNGPSERRRFIDMELCQLSKLYLHNLINYNKVLNQRNNLLKQIGFNKSLLDTLYVWDQQLIHFGSALIKERDAFMKSMNELIIALHKKLSDGKEELEIVYEASVAESEFENKLKKSMERDIALKVTNVGPHRDDLSFLINGQDVRKYGSQGQQRTAALSLKLAEIELVKQVTKDKPILLLDDVLSELDRKRQNQLLDSIVGIQTIVTCTGLEEFVNNRIETDRIYKVIQGTVEKG</sequence>
<accession>A9KPP4</accession>
<comment type="function">
    <text evidence="1">The RecF protein is involved in DNA metabolism; it is required for DNA replication and normal SOS inducibility. RecF binds preferentially to single-stranded, linear DNA. It also seems to bind ATP.</text>
</comment>
<comment type="subcellular location">
    <subcellularLocation>
        <location evidence="1">Cytoplasm</location>
    </subcellularLocation>
</comment>
<comment type="similarity">
    <text evidence="1">Belongs to the RecF family.</text>
</comment>
<dbReference type="EMBL" id="CP000885">
    <property type="protein sequence ID" value="ABX40395.1"/>
    <property type="molecule type" value="Genomic_DNA"/>
</dbReference>
<dbReference type="RefSeq" id="WP_012198038.1">
    <property type="nucleotide sequence ID" value="NC_010001.1"/>
</dbReference>
<dbReference type="SMR" id="A9KPP4"/>
<dbReference type="STRING" id="357809.Cphy_0004"/>
<dbReference type="KEGG" id="cpy:Cphy_0004"/>
<dbReference type="eggNOG" id="COG1195">
    <property type="taxonomic scope" value="Bacteria"/>
</dbReference>
<dbReference type="HOGENOM" id="CLU_040267_0_1_9"/>
<dbReference type="OrthoDB" id="9803889at2"/>
<dbReference type="Proteomes" id="UP000000370">
    <property type="component" value="Chromosome"/>
</dbReference>
<dbReference type="GO" id="GO:0005737">
    <property type="term" value="C:cytoplasm"/>
    <property type="evidence" value="ECO:0007669"/>
    <property type="project" value="UniProtKB-SubCell"/>
</dbReference>
<dbReference type="GO" id="GO:0005524">
    <property type="term" value="F:ATP binding"/>
    <property type="evidence" value="ECO:0007669"/>
    <property type="project" value="UniProtKB-UniRule"/>
</dbReference>
<dbReference type="GO" id="GO:0003697">
    <property type="term" value="F:single-stranded DNA binding"/>
    <property type="evidence" value="ECO:0007669"/>
    <property type="project" value="UniProtKB-UniRule"/>
</dbReference>
<dbReference type="GO" id="GO:0006260">
    <property type="term" value="P:DNA replication"/>
    <property type="evidence" value="ECO:0007669"/>
    <property type="project" value="UniProtKB-UniRule"/>
</dbReference>
<dbReference type="GO" id="GO:0000731">
    <property type="term" value="P:DNA synthesis involved in DNA repair"/>
    <property type="evidence" value="ECO:0007669"/>
    <property type="project" value="TreeGrafter"/>
</dbReference>
<dbReference type="GO" id="GO:0006302">
    <property type="term" value="P:double-strand break repair"/>
    <property type="evidence" value="ECO:0007669"/>
    <property type="project" value="TreeGrafter"/>
</dbReference>
<dbReference type="GO" id="GO:0009432">
    <property type="term" value="P:SOS response"/>
    <property type="evidence" value="ECO:0007669"/>
    <property type="project" value="UniProtKB-UniRule"/>
</dbReference>
<dbReference type="CDD" id="cd03242">
    <property type="entry name" value="ABC_RecF"/>
    <property type="match status" value="1"/>
</dbReference>
<dbReference type="Gene3D" id="3.40.50.300">
    <property type="entry name" value="P-loop containing nucleotide triphosphate hydrolases"/>
    <property type="match status" value="1"/>
</dbReference>
<dbReference type="Gene3D" id="1.20.1050.90">
    <property type="entry name" value="RecF/RecN/SMC, N-terminal domain"/>
    <property type="match status" value="1"/>
</dbReference>
<dbReference type="HAMAP" id="MF_00365">
    <property type="entry name" value="RecF"/>
    <property type="match status" value="1"/>
</dbReference>
<dbReference type="InterPro" id="IPR001238">
    <property type="entry name" value="DNA-binding_RecF"/>
</dbReference>
<dbReference type="InterPro" id="IPR018078">
    <property type="entry name" value="DNA-binding_RecF_CS"/>
</dbReference>
<dbReference type="InterPro" id="IPR027417">
    <property type="entry name" value="P-loop_NTPase"/>
</dbReference>
<dbReference type="InterPro" id="IPR003395">
    <property type="entry name" value="RecF/RecN/SMC_N"/>
</dbReference>
<dbReference type="InterPro" id="IPR042174">
    <property type="entry name" value="RecF_2"/>
</dbReference>
<dbReference type="NCBIfam" id="TIGR00611">
    <property type="entry name" value="recf"/>
    <property type="match status" value="1"/>
</dbReference>
<dbReference type="PANTHER" id="PTHR32182">
    <property type="entry name" value="DNA REPLICATION AND REPAIR PROTEIN RECF"/>
    <property type="match status" value="1"/>
</dbReference>
<dbReference type="PANTHER" id="PTHR32182:SF0">
    <property type="entry name" value="DNA REPLICATION AND REPAIR PROTEIN RECF"/>
    <property type="match status" value="1"/>
</dbReference>
<dbReference type="Pfam" id="PF02463">
    <property type="entry name" value="SMC_N"/>
    <property type="match status" value="1"/>
</dbReference>
<dbReference type="SUPFAM" id="SSF52540">
    <property type="entry name" value="P-loop containing nucleoside triphosphate hydrolases"/>
    <property type="match status" value="1"/>
</dbReference>
<dbReference type="PROSITE" id="PS00618">
    <property type="entry name" value="RECF_2"/>
    <property type="match status" value="1"/>
</dbReference>
<proteinExistence type="inferred from homology"/>
<feature type="chain" id="PRO_1000079585" description="DNA replication and repair protein RecF">
    <location>
        <begin position="1"/>
        <end position="360"/>
    </location>
</feature>
<feature type="binding site" evidence="1">
    <location>
        <begin position="30"/>
        <end position="37"/>
    </location>
    <ligand>
        <name>ATP</name>
        <dbReference type="ChEBI" id="CHEBI:30616"/>
    </ligand>
</feature>